<comment type="function">
    <text evidence="1">Plays an essential role in type IV pili and type II pseudopili formation by proteolytically removing the leader sequence from substrate proteins and subsequently monomethylating the alpha-amino group of the newly exposed N-terminal phenylalanine.</text>
</comment>
<comment type="catalytic activity">
    <reaction evidence="1">
        <text>Typically cleaves a -Gly-|-Phe- bond to release an N-terminal, basic peptide of 5-8 residues from type IV prepilin, and then N-methylates the new N-terminal amino group, the methyl donor being S-adenosyl-L-methionine.</text>
        <dbReference type="EC" id="3.4.23.43"/>
    </reaction>
</comment>
<comment type="cofactor">
    <cofactor evidence="1">
        <name>Zn(2+)</name>
        <dbReference type="ChEBI" id="CHEBI:29105"/>
    </cofactor>
    <text evidence="1">Zinc is required for the N-terminal methylation of the mature pilin, but not for signal peptide cleavage.</text>
</comment>
<comment type="subcellular location">
    <subcellularLocation>
        <location evidence="1">Cell inner membrane</location>
        <topology evidence="1">Multi-pass membrane protein</topology>
    </subcellularLocation>
</comment>
<comment type="similarity">
    <text evidence="3">Belongs to the peptidase A24 family.</text>
</comment>
<comment type="sequence caution" evidence="3">
    <conflict type="erroneous initiation">
        <sequence resource="EMBL-CDS" id="AAD05189"/>
    </conflict>
    <text>Truncated N-terminus.</text>
</comment>
<accession>I1WFC0</accession>
<accession>Q63QL3</accession>
<accession>Q9ZF70</accession>
<feature type="chain" id="PRO_0000429792" description="Prepilin leader peptidase/N-methyltransferase">
    <location>
        <begin position="1"/>
        <end position="309"/>
    </location>
</feature>
<feature type="transmembrane region" description="Helical" evidence="2">
    <location>
        <begin position="35"/>
        <end position="55"/>
    </location>
</feature>
<feature type="transmembrane region" description="Helical" evidence="2">
    <location>
        <begin position="147"/>
        <end position="167"/>
    </location>
</feature>
<feature type="transmembrane region" description="Helical" evidence="2">
    <location>
        <begin position="183"/>
        <end position="203"/>
    </location>
</feature>
<feature type="transmembrane region" description="Helical" evidence="2">
    <location>
        <begin position="207"/>
        <end position="227"/>
    </location>
</feature>
<feature type="transmembrane region" description="Helical" evidence="2">
    <location>
        <begin position="230"/>
        <end position="250"/>
    </location>
</feature>
<feature type="transmembrane region" description="Helical" evidence="2">
    <location>
        <begin position="253"/>
        <end position="273"/>
    </location>
</feature>
<feature type="transmembrane region" description="Helical" evidence="2">
    <location>
        <begin position="288"/>
        <end position="308"/>
    </location>
</feature>
<feature type="binding site" evidence="1">
    <location>
        <position position="96"/>
    </location>
    <ligand>
        <name>Zn(2+)</name>
        <dbReference type="ChEBI" id="CHEBI:29105"/>
    </ligand>
</feature>
<feature type="binding site" evidence="1">
    <location>
        <position position="99"/>
    </location>
    <ligand>
        <name>Zn(2+)</name>
        <dbReference type="ChEBI" id="CHEBI:29105"/>
    </ligand>
</feature>
<feature type="binding site" evidence="1">
    <location>
        <position position="121"/>
    </location>
    <ligand>
        <name>Zn(2+)</name>
        <dbReference type="ChEBI" id="CHEBI:29105"/>
    </ligand>
</feature>
<feature type="binding site" evidence="1">
    <location>
        <position position="124"/>
    </location>
    <ligand>
        <name>Zn(2+)</name>
        <dbReference type="ChEBI" id="CHEBI:29105"/>
    </ligand>
</feature>
<dbReference type="EC" id="3.4.23.43" evidence="1"/>
<dbReference type="EC" id="2.1.1.-" evidence="1"/>
<dbReference type="EMBL" id="AF110186">
    <property type="protein sequence ID" value="AAD05189.1"/>
    <property type="status" value="ALT_INIT"/>
    <property type="molecule type" value="Genomic_DNA"/>
</dbReference>
<dbReference type="EMBL" id="CP002833">
    <property type="protein sequence ID" value="AFI64964.1"/>
    <property type="molecule type" value="Genomic_DNA"/>
</dbReference>
<dbReference type="MEROPS" id="A24.A10"/>
<dbReference type="KEGG" id="bpz:BP1026B_I0298"/>
<dbReference type="PATRIC" id="fig|884204.3.peg.307"/>
<dbReference type="Proteomes" id="UP000010087">
    <property type="component" value="Chromosome 1"/>
</dbReference>
<dbReference type="GO" id="GO:0005886">
    <property type="term" value="C:plasma membrane"/>
    <property type="evidence" value="ECO:0007669"/>
    <property type="project" value="UniProtKB-SubCell"/>
</dbReference>
<dbReference type="GO" id="GO:0004190">
    <property type="term" value="F:aspartic-type endopeptidase activity"/>
    <property type="evidence" value="ECO:0007669"/>
    <property type="project" value="UniProtKB-EC"/>
</dbReference>
<dbReference type="GO" id="GO:0046872">
    <property type="term" value="F:metal ion binding"/>
    <property type="evidence" value="ECO:0007669"/>
    <property type="project" value="UniProtKB-KW"/>
</dbReference>
<dbReference type="GO" id="GO:0008168">
    <property type="term" value="F:methyltransferase activity"/>
    <property type="evidence" value="ECO:0007669"/>
    <property type="project" value="UniProtKB-KW"/>
</dbReference>
<dbReference type="GO" id="GO:0032259">
    <property type="term" value="P:methylation"/>
    <property type="evidence" value="ECO:0007669"/>
    <property type="project" value="UniProtKB-KW"/>
</dbReference>
<dbReference type="GO" id="GO:0006465">
    <property type="term" value="P:signal peptide processing"/>
    <property type="evidence" value="ECO:0007669"/>
    <property type="project" value="TreeGrafter"/>
</dbReference>
<dbReference type="Gene3D" id="1.20.120.1220">
    <property type="match status" value="1"/>
</dbReference>
<dbReference type="InterPro" id="IPR014032">
    <property type="entry name" value="Peptidase_A24A_bac"/>
</dbReference>
<dbReference type="InterPro" id="IPR000045">
    <property type="entry name" value="Prepilin_IV_endopep_pep"/>
</dbReference>
<dbReference type="InterPro" id="IPR010627">
    <property type="entry name" value="Prepilin_pept_A24_N"/>
</dbReference>
<dbReference type="InterPro" id="IPR050882">
    <property type="entry name" value="Prepilin_peptidase/N-MTase"/>
</dbReference>
<dbReference type="PANTHER" id="PTHR30487:SF0">
    <property type="entry name" value="PREPILIN LEADER PEPTIDASE_N-METHYLTRANSFERASE-RELATED"/>
    <property type="match status" value="1"/>
</dbReference>
<dbReference type="PANTHER" id="PTHR30487">
    <property type="entry name" value="TYPE 4 PREPILIN-LIKE PROTEINS LEADER PEPTIDE-PROCESSING ENZYME"/>
    <property type="match status" value="1"/>
</dbReference>
<dbReference type="Pfam" id="PF06750">
    <property type="entry name" value="A24_N_bact"/>
    <property type="match status" value="1"/>
</dbReference>
<dbReference type="Pfam" id="PF01478">
    <property type="entry name" value="Peptidase_A24"/>
    <property type="match status" value="1"/>
</dbReference>
<dbReference type="PRINTS" id="PR00864">
    <property type="entry name" value="PREPILNPTASE"/>
</dbReference>
<keyword id="KW-0997">Cell inner membrane</keyword>
<keyword id="KW-1003">Cell membrane</keyword>
<keyword id="KW-0378">Hydrolase</keyword>
<keyword id="KW-0472">Membrane</keyword>
<keyword id="KW-0479">Metal-binding</keyword>
<keyword id="KW-0489">Methyltransferase</keyword>
<keyword id="KW-0511">Multifunctional enzyme</keyword>
<keyword id="KW-0645">Protease</keyword>
<keyword id="KW-0949">S-adenosyl-L-methionine</keyword>
<keyword id="KW-0808">Transferase</keyword>
<keyword id="KW-0812">Transmembrane</keyword>
<keyword id="KW-1133">Transmembrane helix</keyword>
<keyword id="KW-0862">Zinc</keyword>
<sequence length="309" mass="32224">MPTASMTPNPFLSGSPEHAAAAGPLAAFAALPTGMQLAFAIVLGLVVGSFLNVVVHRLPIMMKRAWLAEIAEATGAPCADDSLPARYNLCVPRSACPHCGHALRAWENVPVLSYIALRGRCRHCRTPIGARYPLIELASGALAAGALALFGPSGAALAAFGLCAALLAMSAIDMQTGFLPDSLTLPLLWAGLCVNLWGTFASLRAAVIGAIAGYLFLWCILWLFKLLRGIEGIGYGDLKLLAALGAWLGWEALPQVVLIAAVAGAAVGLVATWRGRMRFEEPLPFGPFLAAGGAATLFFGTPFYLLLGG</sequence>
<reference key="1">
    <citation type="journal article" date="1999" name="J. Bacteriol.">
        <title>Molecular characterization of genetic loci required for secretion of exoproducts in Burkholderia pseudomallei.</title>
        <authorList>
            <person name="DeShazer D."/>
            <person name="Brett P.J."/>
            <person name="Burtnick M.N."/>
            <person name="Woods D.E."/>
        </authorList>
    </citation>
    <scope>NUCLEOTIDE SEQUENCE [GENOMIC DNA]</scope>
    <source>
        <strain>1026b</strain>
    </source>
</reference>
<reference key="2">
    <citation type="journal article" date="2012" name="PLoS ONE">
        <title>Evolution of Burkholderia pseudomallei in recurrent melioidosis.</title>
        <authorList>
            <person name="Hayden H.S."/>
            <person name="Lim R."/>
            <person name="Brittnacher M.J."/>
            <person name="Sims E.H."/>
            <person name="Ramage E.R."/>
            <person name="Fong C."/>
            <person name="Wu Z."/>
            <person name="Crist E."/>
            <person name="Chang J."/>
            <person name="Zhou Y."/>
            <person name="Radey M."/>
            <person name="Rohmer L."/>
            <person name="Haugen E."/>
            <person name="Gillett W."/>
            <person name="Wuthiekanun V."/>
            <person name="Peacock S.J."/>
            <person name="Kaul R."/>
            <person name="Miller S.I."/>
            <person name="Manoil C."/>
            <person name="Jacobs M.A."/>
        </authorList>
    </citation>
    <scope>NUCLEOTIDE SEQUENCE [LARGE SCALE GENOMIC DNA]</scope>
    <source>
        <strain>1026b</strain>
    </source>
</reference>
<name>LEP4_BURP2</name>
<organism>
    <name type="scientific">Burkholderia pseudomallei (strain 1026b)</name>
    <dbReference type="NCBI Taxonomy" id="884204"/>
    <lineage>
        <taxon>Bacteria</taxon>
        <taxon>Pseudomonadati</taxon>
        <taxon>Pseudomonadota</taxon>
        <taxon>Betaproteobacteria</taxon>
        <taxon>Burkholderiales</taxon>
        <taxon>Burkholderiaceae</taxon>
        <taxon>Burkholderia</taxon>
        <taxon>pseudomallei group</taxon>
    </lineage>
</organism>
<evidence type="ECO:0000250" key="1">
    <source>
        <dbReference type="UniProtKB" id="P22610"/>
    </source>
</evidence>
<evidence type="ECO:0000255" key="2"/>
<evidence type="ECO:0000305" key="3"/>
<gene>
    <name type="primary">gspO</name>
    <name type="ordered locus">BP1026B_I0298</name>
</gene>
<proteinExistence type="inferred from homology"/>
<protein>
    <recommendedName>
        <fullName>Prepilin leader peptidase/N-methyltransferase</fullName>
    </recommendedName>
    <domain>
        <recommendedName>
            <fullName>Leader peptidase</fullName>
            <ecNumber evidence="1">3.4.23.43</ecNumber>
        </recommendedName>
        <alternativeName>
            <fullName>Prepilin peptidase</fullName>
        </alternativeName>
    </domain>
    <domain>
        <recommendedName>
            <fullName>N-methyltransferase</fullName>
            <ecNumber evidence="1">2.1.1.-</ecNumber>
        </recommendedName>
    </domain>
</protein>